<dbReference type="EMBL" id="AB186385">
    <property type="protein sequence ID" value="BAD90814.1"/>
    <property type="molecule type" value="mRNA"/>
</dbReference>
<dbReference type="SMR" id="Q5DWG1"/>
<dbReference type="Allergome" id="805">
    <property type="allergen name" value="Cry j 3"/>
</dbReference>
<dbReference type="GO" id="GO:0006952">
    <property type="term" value="P:defense response"/>
    <property type="evidence" value="ECO:0007669"/>
    <property type="project" value="UniProtKB-KW"/>
</dbReference>
<dbReference type="GO" id="GO:0009737">
    <property type="term" value="P:response to abscisic acid"/>
    <property type="evidence" value="ECO:0000270"/>
    <property type="project" value="UniProtKB"/>
</dbReference>
<dbReference type="CDD" id="cd09218">
    <property type="entry name" value="TLP-PA"/>
    <property type="match status" value="1"/>
</dbReference>
<dbReference type="FunFam" id="2.60.110.10:FF:000002">
    <property type="entry name" value="Thaumatin-like protein 1a"/>
    <property type="match status" value="1"/>
</dbReference>
<dbReference type="Gene3D" id="2.60.110.10">
    <property type="entry name" value="Thaumatin"/>
    <property type="match status" value="1"/>
</dbReference>
<dbReference type="InterPro" id="IPR037176">
    <property type="entry name" value="Osmotin/thaumatin-like_sf"/>
</dbReference>
<dbReference type="InterPro" id="IPR001938">
    <property type="entry name" value="Thaumatin"/>
</dbReference>
<dbReference type="PANTHER" id="PTHR31048">
    <property type="entry name" value="OS03G0233200 PROTEIN"/>
    <property type="match status" value="1"/>
</dbReference>
<dbReference type="Pfam" id="PF00314">
    <property type="entry name" value="Thaumatin"/>
    <property type="match status" value="1"/>
</dbReference>
<dbReference type="PIRSF" id="PIRSF002703">
    <property type="entry name" value="Thaumatin"/>
    <property type="match status" value="1"/>
</dbReference>
<dbReference type="PRINTS" id="PR00347">
    <property type="entry name" value="THAUMATIN"/>
</dbReference>
<dbReference type="SMART" id="SM00205">
    <property type="entry name" value="THN"/>
    <property type="match status" value="1"/>
</dbReference>
<dbReference type="SUPFAM" id="SSF49870">
    <property type="entry name" value="Osmotin, thaumatin-like protein"/>
    <property type="match status" value="1"/>
</dbReference>
<dbReference type="PROSITE" id="PS51367">
    <property type="entry name" value="THAUMATIN_2"/>
    <property type="match status" value="1"/>
</dbReference>
<proteinExistence type="evidence at protein level"/>
<comment type="function">
    <text evidence="7">May be involved in disease resistance.</text>
</comment>
<comment type="tissue specificity">
    <text evidence="3">Strongly expressed in pollen grains (PubMed:16203714). Also present at weak levels in seedling roots, in sapling stems and in developing male strobili (PubMed:16203714).</text>
</comment>
<comment type="induction">
    <text evidence="3">Weakly induced by abscisic acid (ABA).</text>
</comment>
<comment type="allergen">
    <text evidence="4 5 8">Causes an oral allergy syndrome (OAS) reaction in human and animals (PubMed:17441795, PubMed:22749702, PubMed:26433527). Binds to IgE and induces the release of histamine from leukocytes of allergic patients (PubMed:17441795). Binds to IgE from canine atopic dermatitis (CAD) sensitive dogs (PubMed:22749702).</text>
</comment>
<comment type="similarity">
    <text evidence="2">Belongs to the thaumatin family.</text>
</comment>
<keyword id="KW-0020">Allergen</keyword>
<keyword id="KW-1015">Disulfide bond</keyword>
<keyword id="KW-0568">Pathogenesis-related protein</keyword>
<keyword id="KW-0611">Plant defense</keyword>
<keyword id="KW-0732">Signal</keyword>
<keyword id="KW-0346">Stress response</keyword>
<feature type="signal peptide" evidence="1">
    <location>
        <begin position="1"/>
        <end position="20"/>
    </location>
</feature>
<feature type="chain" id="PRO_5004255246" description="Pathogenesis-related thaumatin-like protein 3.5">
    <location>
        <begin position="21"/>
        <end position="240"/>
    </location>
</feature>
<feature type="disulfide bond" evidence="2">
    <location>
        <begin position="31"/>
        <end position="237"/>
    </location>
</feature>
<feature type="disulfide bond" evidence="2">
    <location>
        <begin position="79"/>
        <end position="89"/>
    </location>
</feature>
<feature type="disulfide bond" evidence="2">
    <location>
        <begin position="94"/>
        <end position="100"/>
    </location>
</feature>
<feature type="disulfide bond" evidence="2">
    <location>
        <begin position="145"/>
        <end position="227"/>
    </location>
</feature>
<feature type="disulfide bond" evidence="2">
    <location>
        <begin position="150"/>
        <end position="210"/>
    </location>
</feature>
<feature type="disulfide bond" evidence="2">
    <location>
        <begin position="158"/>
        <end position="173"/>
    </location>
</feature>
<feature type="disulfide bond" evidence="2">
    <location>
        <begin position="177"/>
        <end position="186"/>
    </location>
</feature>
<feature type="disulfide bond" evidence="2">
    <location>
        <begin position="187"/>
        <end position="197"/>
    </location>
</feature>
<sequence>MASLRLATLAMMVLFGSCRAGATVFTLVNKCSYTVWPGTLSGSGSSVLGEGGFTLAPGQSVPLTASSRWSGRFWGRTDCSFDASGKGSCITGDCGNVLNCAQAGGTPPVSLAEFTLGDKDFYDVSLVDGYNVPLSIAAVGGTGDCRTAGCVSDLRTSCPAELSVTSNGQVIACKSACAAFSTPEYCCTGDHGSPQTCSPSKYSQVFKSACPTAYSYAYDDATSTFTCSNADYTITFCPSS</sequence>
<protein>
    <recommendedName>
        <fullName evidence="9">Pathogenesis-related thaumatin-like protein 3.5</fullName>
    </recommendedName>
    <allergenName evidence="6">Cry j 3.5</allergenName>
</protein>
<organism>
    <name type="scientific">Cryptomeria japonica</name>
    <name type="common">Japanese cedar</name>
    <name type="synonym">Cupressus japonica</name>
    <dbReference type="NCBI Taxonomy" id="3369"/>
    <lineage>
        <taxon>Eukaryota</taxon>
        <taxon>Viridiplantae</taxon>
        <taxon>Streptophyta</taxon>
        <taxon>Embryophyta</taxon>
        <taxon>Tracheophyta</taxon>
        <taxon>Spermatophyta</taxon>
        <taxon>Pinopsida</taxon>
        <taxon>Pinidae</taxon>
        <taxon>Conifers II</taxon>
        <taxon>Cupressales</taxon>
        <taxon>Cupressaceae</taxon>
        <taxon>Cryptomeria</taxon>
    </lineage>
</organism>
<accession>Q5DWG1</accession>
<reference key="1">
    <citation type="journal article" date="2006" name="Tree Physiol.">
        <title>Characterization of genes for novel thaumatin-like proteins in Cryptomeria japonica.</title>
        <authorList>
            <person name="Futamura N."/>
            <person name="Tani N."/>
            <person name="Tsumura Y."/>
            <person name="Nakajima N."/>
            <person name="Sakaguchi M."/>
            <person name="Shinohara K."/>
        </authorList>
    </citation>
    <scope>NUCLEOTIDE SEQUENCE [MRNA]</scope>
    <scope>TISSUE SPECIFICITY</scope>
    <scope>INDUCTION BY ABSCISIC ACID</scope>
    <scope>GENE FAMILY</scope>
    <scope>NOMENCLATURE</scope>
    <source>
        <tissue>Pollen</tissue>
    </source>
</reference>
<reference key="2">
    <citation type="journal article" date="2007" name="Allergy">
        <title>Isolation and characterization of native Cry j 3 from Japanese cedar (Cryptomeria japonica) pollen.</title>
        <authorList>
            <person name="Fujimura T."/>
            <person name="Futamura N."/>
            <person name="Midoro-Horiuti T."/>
            <person name="Togawa A."/>
            <person name="Goldblum R.M."/>
            <person name="Yasueda H."/>
            <person name="Saito A."/>
            <person name="Shinohara K."/>
            <person name="Masuda K."/>
            <person name="Kurata K."/>
            <person name="Sakaguchi M."/>
        </authorList>
    </citation>
    <scope>ALLERGEN</scope>
    <source>
        <tissue>Flower</tissue>
    </source>
</reference>
<reference key="3">
    <citation type="journal article" date="2010" name="Plant Cell Rep.">
        <title>The superfamily of thaumatin-like proteins: its origin, evolution, and expression towards biological function.</title>
        <authorList>
            <person name="Liu J.-J."/>
            <person name="Sturrock R."/>
            <person name="Ekramoddoullah A.K.M."/>
        </authorList>
    </citation>
    <scope>REVIEW ON THAUMATIN-LIKE PROTEINS</scope>
</reference>
<reference key="4">
    <citation type="journal article" date="2012" name="Vet. Immunol. Immunopathol.">
        <title>IgE reactivity to a Cry j 3, an allergen of Japanese cedar (Cryptomeria japonica) pollen in dogs with canine atopic dermatitis.</title>
        <authorList>
            <person name="Kubota S."/>
            <person name="Miyaji K."/>
            <person name="Shimo Y."/>
            <person name="Shimakura H."/>
            <person name="Takase Y."/>
            <person name="Okamoto N."/>
            <person name="Kiuchi A."/>
            <person name="Fujimura M."/>
            <person name="Fujimura T."/>
            <person name="DeBoer D.J."/>
            <person name="Tsukui T."/>
            <person name="Sakaguchi M."/>
        </authorList>
    </citation>
    <scope>ALLERGEN</scope>
    <source>
        <tissue>Pollen</tissue>
    </source>
</reference>
<reference key="5">
    <citation type="journal article" date="2015" name="Allergol. Int.">
        <title>Spectrum of allergens for Japanese cedar pollinosis and impact of component-resolved diagnosis on allergen-specific immunotherapy.</title>
        <authorList>
            <person name="Fujimura T."/>
            <person name="Kawamoto S."/>
        </authorList>
    </citation>
    <scope>REVIEW ON ALLERGEN</scope>
</reference>
<evidence type="ECO:0000255" key="1"/>
<evidence type="ECO:0000255" key="2">
    <source>
        <dbReference type="PROSITE-ProRule" id="PRU00699"/>
    </source>
</evidence>
<evidence type="ECO:0000269" key="3">
    <source>
    </source>
</evidence>
<evidence type="ECO:0000269" key="4">
    <source>
    </source>
</evidence>
<evidence type="ECO:0000269" key="5">
    <source>
    </source>
</evidence>
<evidence type="ECO:0000303" key="6">
    <source>
    </source>
</evidence>
<evidence type="ECO:0000303" key="7">
    <source>
    </source>
</evidence>
<evidence type="ECO:0000303" key="8">
    <source>
    </source>
</evidence>
<evidence type="ECO:0000305" key="9"/>
<name>CRJ35_CRYJA</name>